<dbReference type="EC" id="2.7.1.39" evidence="1"/>
<dbReference type="EMBL" id="CP000441">
    <property type="protein sequence ID" value="ABI88791.1"/>
    <property type="molecule type" value="Genomic_DNA"/>
</dbReference>
<dbReference type="RefSeq" id="WP_011658283.1">
    <property type="nucleotide sequence ID" value="NC_008391.1"/>
</dbReference>
<dbReference type="SMR" id="Q0BAN2"/>
<dbReference type="KEGG" id="bam:Bamb_3235"/>
<dbReference type="eggNOG" id="COG2334">
    <property type="taxonomic scope" value="Bacteria"/>
</dbReference>
<dbReference type="UniPathway" id="UPA00050">
    <property type="reaction ID" value="UER00064"/>
</dbReference>
<dbReference type="Proteomes" id="UP000000662">
    <property type="component" value="Chromosome 2"/>
</dbReference>
<dbReference type="GO" id="GO:0005524">
    <property type="term" value="F:ATP binding"/>
    <property type="evidence" value="ECO:0007669"/>
    <property type="project" value="UniProtKB-KW"/>
</dbReference>
<dbReference type="GO" id="GO:0004413">
    <property type="term" value="F:homoserine kinase activity"/>
    <property type="evidence" value="ECO:0007669"/>
    <property type="project" value="UniProtKB-UniRule"/>
</dbReference>
<dbReference type="GO" id="GO:0009088">
    <property type="term" value="P:threonine biosynthetic process"/>
    <property type="evidence" value="ECO:0007669"/>
    <property type="project" value="UniProtKB-UniRule"/>
</dbReference>
<dbReference type="CDD" id="cd05153">
    <property type="entry name" value="HomoserineK_II"/>
    <property type="match status" value="1"/>
</dbReference>
<dbReference type="Gene3D" id="3.90.1200.10">
    <property type="match status" value="1"/>
</dbReference>
<dbReference type="Gene3D" id="3.30.200.20">
    <property type="entry name" value="Phosphorylase Kinase, domain 1"/>
    <property type="match status" value="1"/>
</dbReference>
<dbReference type="HAMAP" id="MF_00301">
    <property type="entry name" value="Homoser_kinase_2"/>
    <property type="match status" value="1"/>
</dbReference>
<dbReference type="InterPro" id="IPR002575">
    <property type="entry name" value="Aminoglycoside_PTrfase"/>
</dbReference>
<dbReference type="InterPro" id="IPR005280">
    <property type="entry name" value="Homoserine_kinase_II"/>
</dbReference>
<dbReference type="InterPro" id="IPR011009">
    <property type="entry name" value="Kinase-like_dom_sf"/>
</dbReference>
<dbReference type="InterPro" id="IPR050249">
    <property type="entry name" value="Pseudomonas-type_ThrB"/>
</dbReference>
<dbReference type="NCBIfam" id="NF003558">
    <property type="entry name" value="PRK05231.1"/>
    <property type="match status" value="1"/>
</dbReference>
<dbReference type="NCBIfam" id="TIGR00938">
    <property type="entry name" value="thrB_alt"/>
    <property type="match status" value="1"/>
</dbReference>
<dbReference type="PANTHER" id="PTHR21064:SF6">
    <property type="entry name" value="AMINOGLYCOSIDE PHOSPHOTRANSFERASE DOMAIN-CONTAINING PROTEIN"/>
    <property type="match status" value="1"/>
</dbReference>
<dbReference type="PANTHER" id="PTHR21064">
    <property type="entry name" value="AMINOGLYCOSIDE PHOSPHOTRANSFERASE DOMAIN-CONTAINING PROTEIN-RELATED"/>
    <property type="match status" value="1"/>
</dbReference>
<dbReference type="Pfam" id="PF01636">
    <property type="entry name" value="APH"/>
    <property type="match status" value="1"/>
</dbReference>
<dbReference type="SUPFAM" id="SSF56112">
    <property type="entry name" value="Protein kinase-like (PK-like)"/>
    <property type="match status" value="1"/>
</dbReference>
<organism>
    <name type="scientific">Burkholderia ambifaria (strain ATCC BAA-244 / DSM 16087 / CCUG 44356 / LMG 19182 / AMMD)</name>
    <name type="common">Burkholderia cepacia (strain AMMD)</name>
    <dbReference type="NCBI Taxonomy" id="339670"/>
    <lineage>
        <taxon>Bacteria</taxon>
        <taxon>Pseudomonadati</taxon>
        <taxon>Pseudomonadota</taxon>
        <taxon>Betaproteobacteria</taxon>
        <taxon>Burkholderiales</taxon>
        <taxon>Burkholderiaceae</taxon>
        <taxon>Burkholderia</taxon>
        <taxon>Burkholderia cepacia complex</taxon>
    </lineage>
</organism>
<gene>
    <name evidence="1" type="primary">thrB</name>
    <name type="ordered locus">Bamb_3235</name>
</gene>
<sequence length="332" mass="37226">MAVFTAVSDSDLAQWMRHYELGDVLAFRGIPSGIENSNFFLTTTRGEYVLTIFEKLTAEQLPFYLDLMRHLASHGVPVPDPIPRDDGALFGLLHGKPAAIVTKLDGAAELAPGIEHCIEVGQMLARLHLAGRDYARYQPNLRSLPWWRENVPAIVPFVSDAQRTLLEGELAHQAAFFASDDYAALPSGPCHCDLFRDNVLFAHAAPGTGHDVRLGGFFDFYFAGCDKWLFDVAVTVNDWCVDLATGVLDVARADALLRAYQTVRPFTAPERRHWSDMLRAGAYRFWVSRLYDFYLPRAAEMLKPHDPGHFERILRERIANTPALPETHTACN</sequence>
<protein>
    <recommendedName>
        <fullName evidence="1">Homoserine kinase</fullName>
        <shortName evidence="1">HK</shortName>
        <shortName evidence="1">HSK</shortName>
        <ecNumber evidence="1">2.7.1.39</ecNumber>
    </recommendedName>
</protein>
<comment type="catalytic activity">
    <reaction evidence="1">
        <text>L-homoserine + ATP = O-phospho-L-homoserine + ADP + H(+)</text>
        <dbReference type="Rhea" id="RHEA:13985"/>
        <dbReference type="ChEBI" id="CHEBI:15378"/>
        <dbReference type="ChEBI" id="CHEBI:30616"/>
        <dbReference type="ChEBI" id="CHEBI:57476"/>
        <dbReference type="ChEBI" id="CHEBI:57590"/>
        <dbReference type="ChEBI" id="CHEBI:456216"/>
        <dbReference type="EC" id="2.7.1.39"/>
    </reaction>
</comment>
<comment type="pathway">
    <text evidence="1">Amino-acid biosynthesis; L-threonine biosynthesis; L-threonine from L-aspartate: step 4/5.</text>
</comment>
<comment type="similarity">
    <text evidence="1">Belongs to the pseudomonas-type ThrB family.</text>
</comment>
<accession>Q0BAN2</accession>
<feature type="chain" id="PRO_0000300786" description="Homoserine kinase">
    <location>
        <begin position="1"/>
        <end position="332"/>
    </location>
</feature>
<keyword id="KW-0028">Amino-acid biosynthesis</keyword>
<keyword id="KW-0067">ATP-binding</keyword>
<keyword id="KW-0418">Kinase</keyword>
<keyword id="KW-0547">Nucleotide-binding</keyword>
<keyword id="KW-0791">Threonine biosynthesis</keyword>
<keyword id="KW-0808">Transferase</keyword>
<evidence type="ECO:0000255" key="1">
    <source>
        <dbReference type="HAMAP-Rule" id="MF_00301"/>
    </source>
</evidence>
<reference key="1">
    <citation type="submission" date="2006-08" db="EMBL/GenBank/DDBJ databases">
        <title>Complete sequence of chromosome 2 of Burkholderia cepacia AMMD.</title>
        <authorList>
            <person name="Copeland A."/>
            <person name="Lucas S."/>
            <person name="Lapidus A."/>
            <person name="Barry K."/>
            <person name="Detter J.C."/>
            <person name="Glavina del Rio T."/>
            <person name="Hammon N."/>
            <person name="Israni S."/>
            <person name="Pitluck S."/>
            <person name="Bruce D."/>
            <person name="Chain P."/>
            <person name="Malfatti S."/>
            <person name="Shin M."/>
            <person name="Vergez L."/>
            <person name="Schmutz J."/>
            <person name="Larimer F."/>
            <person name="Land M."/>
            <person name="Hauser L."/>
            <person name="Kyrpides N."/>
            <person name="Kim E."/>
            <person name="Parke J."/>
            <person name="Coenye T."/>
            <person name="Konstantinidis K."/>
            <person name="Ramette A."/>
            <person name="Tiedje J."/>
            <person name="Richardson P."/>
        </authorList>
    </citation>
    <scope>NUCLEOTIDE SEQUENCE [LARGE SCALE GENOMIC DNA]</scope>
    <source>
        <strain>ATCC BAA-244 / DSM 16087 / CCUG 44356 / LMG 19182 / AMMD</strain>
    </source>
</reference>
<proteinExistence type="inferred from homology"/>
<name>KHSE_BURCM</name>